<accession>Q2RJU7</accession>
<gene>
    <name evidence="1" type="primary">nuoA</name>
    <name type="ordered locus">Moth_0977</name>
</gene>
<protein>
    <recommendedName>
        <fullName evidence="1">NADH-quinone oxidoreductase subunit A</fullName>
        <ecNumber evidence="1">7.1.1.-</ecNumber>
    </recommendedName>
    <alternativeName>
        <fullName evidence="1">NADH dehydrogenase I subunit A</fullName>
    </alternativeName>
    <alternativeName>
        <fullName evidence="1">NDH-1 subunit A</fullName>
    </alternativeName>
    <alternativeName>
        <fullName evidence="1">NUO1</fullName>
    </alternativeName>
</protein>
<proteinExistence type="inferred from homology"/>
<comment type="function">
    <text evidence="1">NDH-1 shuttles electrons from NADH, via FMN and iron-sulfur (Fe-S) centers, to quinones in the respiratory chain. The immediate electron acceptor for the enzyme in this species is believed to be a menaquinone. Couples the redox reaction to proton translocation (for every two electrons transferred, four hydrogen ions are translocated across the cytoplasmic membrane), and thus conserves the redox energy in a proton gradient.</text>
</comment>
<comment type="catalytic activity">
    <reaction evidence="1">
        <text>a quinone + NADH + 5 H(+)(in) = a quinol + NAD(+) + 4 H(+)(out)</text>
        <dbReference type="Rhea" id="RHEA:57888"/>
        <dbReference type="ChEBI" id="CHEBI:15378"/>
        <dbReference type="ChEBI" id="CHEBI:24646"/>
        <dbReference type="ChEBI" id="CHEBI:57540"/>
        <dbReference type="ChEBI" id="CHEBI:57945"/>
        <dbReference type="ChEBI" id="CHEBI:132124"/>
    </reaction>
</comment>
<comment type="subunit">
    <text evidence="1">NDH-1 is composed of 14 different subunits. Subunits NuoA, H, J, K, L, M, N constitute the membrane sector of the complex.</text>
</comment>
<comment type="subcellular location">
    <subcellularLocation>
        <location evidence="1">Cell membrane</location>
        <topology evidence="1">Multi-pass membrane protein</topology>
    </subcellularLocation>
</comment>
<comment type="similarity">
    <text evidence="1">Belongs to the complex I subunit 3 family.</text>
</comment>
<name>NUOA_MOOTA</name>
<organism>
    <name type="scientific">Moorella thermoacetica (strain ATCC 39073 / JCM 9320)</name>
    <dbReference type="NCBI Taxonomy" id="264732"/>
    <lineage>
        <taxon>Bacteria</taxon>
        <taxon>Bacillati</taxon>
        <taxon>Bacillota</taxon>
        <taxon>Clostridia</taxon>
        <taxon>Moorellales</taxon>
        <taxon>Moorellaceae</taxon>
        <taxon>Moorella</taxon>
    </lineage>
</organism>
<keyword id="KW-1003">Cell membrane</keyword>
<keyword id="KW-0472">Membrane</keyword>
<keyword id="KW-0520">NAD</keyword>
<keyword id="KW-0874">Quinone</keyword>
<keyword id="KW-1278">Translocase</keyword>
<keyword id="KW-0812">Transmembrane</keyword>
<keyword id="KW-1133">Transmembrane helix</keyword>
<keyword id="KW-0813">Transport</keyword>
<evidence type="ECO:0000255" key="1">
    <source>
        <dbReference type="HAMAP-Rule" id="MF_01394"/>
    </source>
</evidence>
<feature type="chain" id="PRO_5000105751" description="NADH-quinone oxidoreductase subunit A">
    <location>
        <begin position="1"/>
        <end position="120"/>
    </location>
</feature>
<feature type="transmembrane region" description="Helical" evidence="1">
    <location>
        <begin position="6"/>
        <end position="26"/>
    </location>
</feature>
<feature type="transmembrane region" description="Helical" evidence="1">
    <location>
        <begin position="63"/>
        <end position="83"/>
    </location>
</feature>
<feature type="transmembrane region" description="Helical" evidence="1">
    <location>
        <begin position="89"/>
        <end position="109"/>
    </location>
</feature>
<sequence>MVLQQYGIIAVFLVGGAATAVAALATNWLLRPKKPPEGDKLAAYECGLKTQGPTWIQFKVSYFLYALVFLLFDVETVFLYPWAVRFQALGLFAFAEMIVFIGILVLGLWYAWKEGALKWL</sequence>
<reference key="1">
    <citation type="journal article" date="2008" name="Environ. Microbiol.">
        <title>The complete genome sequence of Moorella thermoacetica (f. Clostridium thermoaceticum).</title>
        <authorList>
            <person name="Pierce E."/>
            <person name="Xie G."/>
            <person name="Barabote R.D."/>
            <person name="Saunders E."/>
            <person name="Han C.S."/>
            <person name="Detter J.C."/>
            <person name="Richardson P."/>
            <person name="Brettin T.S."/>
            <person name="Das A."/>
            <person name="Ljungdahl L.G."/>
            <person name="Ragsdale S.W."/>
        </authorList>
    </citation>
    <scope>NUCLEOTIDE SEQUENCE [LARGE SCALE GENOMIC DNA]</scope>
    <source>
        <strain>ATCC 39073 / JCM 9320</strain>
    </source>
</reference>
<dbReference type="EC" id="7.1.1.-" evidence="1"/>
<dbReference type="EMBL" id="CP000232">
    <property type="protein sequence ID" value="ABC19292.1"/>
    <property type="molecule type" value="Genomic_DNA"/>
</dbReference>
<dbReference type="RefSeq" id="YP_429835.1">
    <property type="nucleotide sequence ID" value="NC_007644.1"/>
</dbReference>
<dbReference type="SMR" id="Q2RJU7"/>
<dbReference type="STRING" id="264732.Moth_0977"/>
<dbReference type="EnsemblBacteria" id="ABC19292">
    <property type="protein sequence ID" value="ABC19292"/>
    <property type="gene ID" value="Moth_0977"/>
</dbReference>
<dbReference type="KEGG" id="mta:Moth_0977"/>
<dbReference type="PATRIC" id="fig|264732.11.peg.1051"/>
<dbReference type="eggNOG" id="COG0838">
    <property type="taxonomic scope" value="Bacteria"/>
</dbReference>
<dbReference type="HOGENOM" id="CLU_119549_1_1_9"/>
<dbReference type="OrthoDB" id="9791970at2"/>
<dbReference type="GO" id="GO:0030964">
    <property type="term" value="C:NADH dehydrogenase complex"/>
    <property type="evidence" value="ECO:0007669"/>
    <property type="project" value="TreeGrafter"/>
</dbReference>
<dbReference type="GO" id="GO:0005886">
    <property type="term" value="C:plasma membrane"/>
    <property type="evidence" value="ECO:0007669"/>
    <property type="project" value="UniProtKB-SubCell"/>
</dbReference>
<dbReference type="GO" id="GO:0008137">
    <property type="term" value="F:NADH dehydrogenase (ubiquinone) activity"/>
    <property type="evidence" value="ECO:0007669"/>
    <property type="project" value="InterPro"/>
</dbReference>
<dbReference type="GO" id="GO:0050136">
    <property type="term" value="F:NADH:ubiquinone reductase (non-electrogenic) activity"/>
    <property type="evidence" value="ECO:0007669"/>
    <property type="project" value="UniProtKB-UniRule"/>
</dbReference>
<dbReference type="GO" id="GO:0048038">
    <property type="term" value="F:quinone binding"/>
    <property type="evidence" value="ECO:0007669"/>
    <property type="project" value="UniProtKB-KW"/>
</dbReference>
<dbReference type="Gene3D" id="1.20.58.1610">
    <property type="entry name" value="NADH:ubiquinone/plastoquinone oxidoreductase, chain 3"/>
    <property type="match status" value="1"/>
</dbReference>
<dbReference type="HAMAP" id="MF_01394">
    <property type="entry name" value="NDH1_NuoA"/>
    <property type="match status" value="1"/>
</dbReference>
<dbReference type="InterPro" id="IPR023043">
    <property type="entry name" value="NAD(P)H_OxRDtase_bac/plastid"/>
</dbReference>
<dbReference type="InterPro" id="IPR000440">
    <property type="entry name" value="NADH_UbQ/plastoQ_OxRdtase_su3"/>
</dbReference>
<dbReference type="InterPro" id="IPR038430">
    <property type="entry name" value="NDAH_ubi_oxred_su3_sf"/>
</dbReference>
<dbReference type="PANTHER" id="PTHR11058">
    <property type="entry name" value="NADH-UBIQUINONE OXIDOREDUCTASE CHAIN 3"/>
    <property type="match status" value="1"/>
</dbReference>
<dbReference type="PANTHER" id="PTHR11058:SF9">
    <property type="entry name" value="NADH-UBIQUINONE OXIDOREDUCTASE CHAIN 3"/>
    <property type="match status" value="1"/>
</dbReference>
<dbReference type="Pfam" id="PF00507">
    <property type="entry name" value="Oxidored_q4"/>
    <property type="match status" value="1"/>
</dbReference>